<dbReference type="EMBL" id="AE017332">
    <property type="protein sequence ID" value="AAV27894.1"/>
    <property type="molecule type" value="Genomic_DNA"/>
</dbReference>
<dbReference type="RefSeq" id="WP_011206292.1">
    <property type="nucleotide sequence ID" value="NC_006360.1"/>
</dbReference>
<dbReference type="SMR" id="Q600J7"/>
<dbReference type="GeneID" id="41334755"/>
<dbReference type="KEGG" id="mhy:mhp458"/>
<dbReference type="eggNOG" id="COG0081">
    <property type="taxonomic scope" value="Bacteria"/>
</dbReference>
<dbReference type="HOGENOM" id="CLU_062853_0_0_14"/>
<dbReference type="PhylomeDB" id="Q600J7"/>
<dbReference type="Proteomes" id="UP000006822">
    <property type="component" value="Chromosome"/>
</dbReference>
<dbReference type="GO" id="GO:0015934">
    <property type="term" value="C:large ribosomal subunit"/>
    <property type="evidence" value="ECO:0007669"/>
    <property type="project" value="InterPro"/>
</dbReference>
<dbReference type="GO" id="GO:0019843">
    <property type="term" value="F:rRNA binding"/>
    <property type="evidence" value="ECO:0007669"/>
    <property type="project" value="UniProtKB-UniRule"/>
</dbReference>
<dbReference type="GO" id="GO:0003735">
    <property type="term" value="F:structural constituent of ribosome"/>
    <property type="evidence" value="ECO:0007669"/>
    <property type="project" value="InterPro"/>
</dbReference>
<dbReference type="GO" id="GO:0000049">
    <property type="term" value="F:tRNA binding"/>
    <property type="evidence" value="ECO:0007669"/>
    <property type="project" value="UniProtKB-KW"/>
</dbReference>
<dbReference type="GO" id="GO:0006417">
    <property type="term" value="P:regulation of translation"/>
    <property type="evidence" value="ECO:0007669"/>
    <property type="project" value="UniProtKB-KW"/>
</dbReference>
<dbReference type="GO" id="GO:0006412">
    <property type="term" value="P:translation"/>
    <property type="evidence" value="ECO:0007669"/>
    <property type="project" value="UniProtKB-UniRule"/>
</dbReference>
<dbReference type="CDD" id="cd00403">
    <property type="entry name" value="Ribosomal_L1"/>
    <property type="match status" value="1"/>
</dbReference>
<dbReference type="FunFam" id="3.40.50.790:FF:000001">
    <property type="entry name" value="50S ribosomal protein L1"/>
    <property type="match status" value="1"/>
</dbReference>
<dbReference type="Gene3D" id="3.30.190.20">
    <property type="match status" value="1"/>
</dbReference>
<dbReference type="Gene3D" id="3.40.50.790">
    <property type="match status" value="1"/>
</dbReference>
<dbReference type="HAMAP" id="MF_01318_B">
    <property type="entry name" value="Ribosomal_uL1_B"/>
    <property type="match status" value="1"/>
</dbReference>
<dbReference type="InterPro" id="IPR005878">
    <property type="entry name" value="Ribosom_uL1_bac-type"/>
</dbReference>
<dbReference type="InterPro" id="IPR002143">
    <property type="entry name" value="Ribosomal_uL1"/>
</dbReference>
<dbReference type="InterPro" id="IPR023674">
    <property type="entry name" value="Ribosomal_uL1-like"/>
</dbReference>
<dbReference type="InterPro" id="IPR028364">
    <property type="entry name" value="Ribosomal_uL1/biogenesis"/>
</dbReference>
<dbReference type="InterPro" id="IPR016095">
    <property type="entry name" value="Ribosomal_uL1_3-a/b-sand"/>
</dbReference>
<dbReference type="InterPro" id="IPR023673">
    <property type="entry name" value="Ribosomal_uL1_CS"/>
</dbReference>
<dbReference type="NCBIfam" id="TIGR01169">
    <property type="entry name" value="rplA_bact"/>
    <property type="match status" value="1"/>
</dbReference>
<dbReference type="PANTHER" id="PTHR36427">
    <property type="entry name" value="54S RIBOSOMAL PROTEIN L1, MITOCHONDRIAL"/>
    <property type="match status" value="1"/>
</dbReference>
<dbReference type="PANTHER" id="PTHR36427:SF3">
    <property type="entry name" value="LARGE RIBOSOMAL SUBUNIT PROTEIN UL1M"/>
    <property type="match status" value="1"/>
</dbReference>
<dbReference type="Pfam" id="PF00687">
    <property type="entry name" value="Ribosomal_L1"/>
    <property type="match status" value="1"/>
</dbReference>
<dbReference type="PIRSF" id="PIRSF002155">
    <property type="entry name" value="Ribosomal_L1"/>
    <property type="match status" value="1"/>
</dbReference>
<dbReference type="SUPFAM" id="SSF56808">
    <property type="entry name" value="Ribosomal protein L1"/>
    <property type="match status" value="1"/>
</dbReference>
<dbReference type="PROSITE" id="PS01199">
    <property type="entry name" value="RIBOSOMAL_L1"/>
    <property type="match status" value="1"/>
</dbReference>
<sequence length="231" mass="25601">MKKVSRNLLQARQMVDKNRFYSLEEAMELVKKTSYTKFSGSVDLAIRLNLDTRKADQQLRGAVVLPHGTGKSVRVLVATDSSEVAAKSLEAGADLIYSTAELEQNLKIDNFNFDVIVVEPKLMPILGRYGKKLGPKGLMPNPKTGTVSPNPEKAVAEIKKGKANYRADRYGIIHSLIGKTNMEVPQLVENANTLLRLIKRLKPNTVKGNYFKNLTVSASMGPSIKIRFDNL</sequence>
<accession>Q600J7</accession>
<comment type="function">
    <text evidence="1">Binds directly to 23S rRNA. The L1 stalk is quite mobile in the ribosome, and is involved in E site tRNA release.</text>
</comment>
<comment type="function">
    <text evidence="1">Protein L1 is also a translational repressor protein, it controls the translation of the L11 operon by binding to its mRNA.</text>
</comment>
<comment type="subunit">
    <text evidence="1">Part of the 50S ribosomal subunit.</text>
</comment>
<comment type="similarity">
    <text evidence="1">Belongs to the universal ribosomal protein uL1 family.</text>
</comment>
<feature type="chain" id="PRO_0000125688" description="Large ribosomal subunit protein uL1">
    <location>
        <begin position="1"/>
        <end position="231"/>
    </location>
</feature>
<organism>
    <name type="scientific">Mesomycoplasma hyopneumoniae (strain 232)</name>
    <name type="common">Mycoplasma hyopneumoniae</name>
    <dbReference type="NCBI Taxonomy" id="295358"/>
    <lineage>
        <taxon>Bacteria</taxon>
        <taxon>Bacillati</taxon>
        <taxon>Mycoplasmatota</taxon>
        <taxon>Mycoplasmoidales</taxon>
        <taxon>Metamycoplasmataceae</taxon>
        <taxon>Mesomycoplasma</taxon>
    </lineage>
</organism>
<proteinExistence type="inferred from homology"/>
<gene>
    <name evidence="1" type="primary">rplA</name>
    <name type="ordered locus">mhp458</name>
</gene>
<evidence type="ECO:0000255" key="1">
    <source>
        <dbReference type="HAMAP-Rule" id="MF_01318"/>
    </source>
</evidence>
<evidence type="ECO:0000305" key="2"/>
<reference key="1">
    <citation type="journal article" date="2004" name="J. Bacteriol.">
        <title>The genome sequence of Mycoplasma hyopneumoniae strain 232, the agent of swine mycoplasmosis.</title>
        <authorList>
            <person name="Minion F.C."/>
            <person name="Lefkowitz E.J."/>
            <person name="Madsen M.L."/>
            <person name="Cleary B.J."/>
            <person name="Swartzell S.M."/>
            <person name="Mahairas G.G."/>
        </authorList>
    </citation>
    <scope>NUCLEOTIDE SEQUENCE [LARGE SCALE GENOMIC DNA]</scope>
    <source>
        <strain>232</strain>
    </source>
</reference>
<name>RL1_MESH2</name>
<keyword id="KW-0678">Repressor</keyword>
<keyword id="KW-0687">Ribonucleoprotein</keyword>
<keyword id="KW-0689">Ribosomal protein</keyword>
<keyword id="KW-0694">RNA-binding</keyword>
<keyword id="KW-0699">rRNA-binding</keyword>
<keyword id="KW-0810">Translation regulation</keyword>
<keyword id="KW-0820">tRNA-binding</keyword>
<protein>
    <recommendedName>
        <fullName evidence="1">Large ribosomal subunit protein uL1</fullName>
    </recommendedName>
    <alternativeName>
        <fullName evidence="2">50S ribosomal protein L1</fullName>
    </alternativeName>
</protein>